<sequence length="941" mass="106764">MNKKKKPFLGMPAPLGYVPGLGRGATGFTTRSDIGPARDANDPVDDRHAPPGKRTVGDQMKKNQAADDDDEDLNDTNYDEFNGYAGSLFSSGPYEKDDEEADAIYAALDKRMDERRKERREQREKEEIEKYRMERPKIQQQFSDLKRKLAEVTEEEWLSIPEVGDARNKRQRNPRYEKLTPVPDSFFAKHLQTGENHTSVDPRQTQFGGLNTPYPGGLNTPYPGGMTPGLMTPGTGELDMRKIGQARNTLMDMRLSQVSDSVSGQTVVDPKGYLTDLNSMIPTHGGDINDIKKARLLLKSVRETNPHHPPAWIASARLEEVTGKLQVARNLIMKGTEMCPKSEDVWLEAARLQPGDTAKAVVAQAVRHLPQSVRIYIRAAELETDIRAKKRVLRKALEHVPNSVRLWKAAVELEEPEDARIMLSRAVECCPTSVELWLALARLETYENARKVLNKARENIPTDRHIWITAAKLEEANGNTQMVEKIIDRAITSLRANGVEINREQWIQDAEECDRAGSVATCQAVMRAVIGIGIEEEDRKHTWMEDADSCVAHNALECARAIYAYALQVFPSKKSVWLRAAYFEKNHGTRESLEALLQRAVAHCPKAEVLWLMGAKSKWLAGDVPAARSILALAFQANPNSEEIWLAAVKLESENNEYERARRLLAKARSSAPTARVFMKSVKLEWVLGNITAAQELCEEALRHYEDFPKLWMMKGQIEEQGELMERAREAYNQGLKKCPHSTPLWLLLSRLEEKIGQLTRARAILEKSRLKNPKNPGLWLESVRLEYRAGLKNIANTLMAKALQECPNSGILWSEAVFLEARPQRKTKSVDALKKCEHDPHVLLAVAKLFWSERKITKAREWFHRTVKIDSDLGDAWAFFYKFELQHGTEEQQEEVRKRCENAEPRHGELWCAVSKDITNWQRKIGEILVLVAARIKNTF</sequence>
<gene>
    <name type="primary">Prpf6</name>
</gene>
<protein>
    <recommendedName>
        <fullName>Pre-mRNA-processing factor 6</fullName>
    </recommendedName>
    <alternativeName>
        <fullName>PRP6 homolog</fullName>
    </alternativeName>
    <alternativeName>
        <fullName>U5 snRNP-associated 102 kDa protein</fullName>
        <shortName>U5-102 kDa protein</shortName>
    </alternativeName>
</protein>
<evidence type="ECO:0000250" key="1">
    <source>
        <dbReference type="UniProtKB" id="O94906"/>
    </source>
</evidence>
<evidence type="ECO:0000256" key="2">
    <source>
        <dbReference type="SAM" id="MobiDB-lite"/>
    </source>
</evidence>
<evidence type="ECO:0007744" key="3">
    <source>
    </source>
</evidence>
<name>PRP6_RAT</name>
<feature type="chain" id="PRO_0000413096" description="Pre-mRNA-processing factor 6">
    <location>
        <begin position="1"/>
        <end position="941"/>
    </location>
</feature>
<feature type="repeat" description="HAT 1">
    <location>
        <begin position="384"/>
        <end position="416"/>
    </location>
</feature>
<feature type="repeat" description="HAT 2">
    <location>
        <begin position="418"/>
        <end position="444"/>
    </location>
</feature>
<feature type="repeat" description="HAT 3">
    <location>
        <begin position="445"/>
        <end position="476"/>
    </location>
</feature>
<feature type="repeat" description="HAT 4">
    <location>
        <begin position="554"/>
        <end position="586"/>
    </location>
</feature>
<feature type="repeat" description="HAT 5">
    <location>
        <begin position="588"/>
        <end position="620"/>
    </location>
</feature>
<feature type="repeat" description="HAT 6">
    <location>
        <begin position="622"/>
        <end position="654"/>
    </location>
</feature>
<feature type="repeat" description="HAT 7">
    <location>
        <begin position="689"/>
        <end position="721"/>
    </location>
</feature>
<feature type="repeat" description="HAT 8">
    <location>
        <begin position="723"/>
        <end position="755"/>
    </location>
</feature>
<feature type="repeat" description="HAT 9">
    <location>
        <begin position="855"/>
        <end position="887"/>
    </location>
</feature>
<feature type="region of interest" description="Disordered" evidence="2">
    <location>
        <begin position="1"/>
        <end position="79"/>
    </location>
</feature>
<feature type="compositionally biased region" description="Basic and acidic residues" evidence="2">
    <location>
        <begin position="39"/>
        <end position="65"/>
    </location>
</feature>
<feature type="compositionally biased region" description="Acidic residues" evidence="2">
    <location>
        <begin position="66"/>
        <end position="78"/>
    </location>
</feature>
<feature type="modified residue" description="Phosphoserine" evidence="3">
    <location>
        <position position="143"/>
    </location>
</feature>
<feature type="modified residue" description="Phosphothreonine" evidence="1">
    <location>
        <position position="180"/>
    </location>
</feature>
<feature type="modified residue" description="Phosphothreonine" evidence="1">
    <location>
        <position position="266"/>
    </location>
</feature>
<feature type="modified residue" description="Phosphothreonine" evidence="1">
    <location>
        <position position="275"/>
    </location>
</feature>
<feature type="modified residue" description="Phosphoserine" evidence="1">
    <location>
        <position position="279"/>
    </location>
</feature>
<organism>
    <name type="scientific">Rattus norvegicus</name>
    <name type="common">Rat</name>
    <dbReference type="NCBI Taxonomy" id="10116"/>
    <lineage>
        <taxon>Eukaryota</taxon>
        <taxon>Metazoa</taxon>
        <taxon>Chordata</taxon>
        <taxon>Craniata</taxon>
        <taxon>Vertebrata</taxon>
        <taxon>Euteleostomi</taxon>
        <taxon>Mammalia</taxon>
        <taxon>Eutheria</taxon>
        <taxon>Euarchontoglires</taxon>
        <taxon>Glires</taxon>
        <taxon>Rodentia</taxon>
        <taxon>Myomorpha</taxon>
        <taxon>Muroidea</taxon>
        <taxon>Muridae</taxon>
        <taxon>Murinae</taxon>
        <taxon>Rattus</taxon>
    </lineage>
</organism>
<reference key="1">
    <citation type="submission" date="2005-07" db="EMBL/GenBank/DDBJ databases">
        <authorList>
            <person name="Mural R.J."/>
            <person name="Adams M.D."/>
            <person name="Myers E.W."/>
            <person name="Smith H.O."/>
            <person name="Venter J.C."/>
        </authorList>
    </citation>
    <scope>NUCLEOTIDE SEQUENCE [LARGE SCALE GENOMIC DNA]</scope>
</reference>
<reference key="2">
    <citation type="journal article" date="2004" name="Genome Res.">
        <title>The status, quality, and expansion of the NIH full-length cDNA project: the Mammalian Gene Collection (MGC).</title>
        <authorList>
            <consortium name="The MGC Project Team"/>
        </authorList>
    </citation>
    <scope>NUCLEOTIDE SEQUENCE [LARGE SCALE MRNA]</scope>
    <source>
        <strain>Brown Norway</strain>
        <tissue>Heart</tissue>
    </source>
</reference>
<reference key="3">
    <citation type="journal article" date="2012" name="Nat. Commun.">
        <title>Quantitative maps of protein phosphorylation sites across 14 different rat organs and tissues.</title>
        <authorList>
            <person name="Lundby A."/>
            <person name="Secher A."/>
            <person name="Lage K."/>
            <person name="Nordsborg N.B."/>
            <person name="Dmytriyev A."/>
            <person name="Lundby C."/>
            <person name="Olsen J.V."/>
        </authorList>
    </citation>
    <scope>PHOSPHORYLATION [LARGE SCALE ANALYSIS] AT SER-143</scope>
    <scope>IDENTIFICATION BY MASS SPECTROMETRY [LARGE SCALE ANALYSIS]</scope>
</reference>
<comment type="function">
    <text evidence="1">Involved in pre-mRNA splicing as component of the U4/U6-U5 tri-snRNP complex, one of the building blocks of the spliceosome. Enhances dihydrotestosterone-induced transactivation activity of AR, as well as dexamethasone-induced transactivation activity of NR3C1, but does not affect estrogen-induced transactivation.</text>
</comment>
<comment type="subunit">
    <text evidence="1">Identified in the spliceosome B complex. Identified in the spliceosome C complex. Associates with the U5 snRNP particle. Component of the U4/U6-U5 tri-snRNP complex composed of the U4, U6 and U5 snRNAs and at least PRPF3, PRPF4, PRPF6, PRPF8, PRPF31, SNRNP200, TXNL4A, SNRNP40, DDX23, CD2BP2, PPIH, SNU13, EFTUD2, SART1 and USP39, LSm proteins LSm2-8 and Sm proteins. Interacts with ARAF1. Interacts with AR and NR3C1, but not ESR1, independently of the presence of hormones. Interacts with USH1G.</text>
</comment>
<comment type="subcellular location">
    <subcellularLocation>
        <location evidence="1">Nucleus</location>
        <location evidence="1">Nucleoplasm</location>
    </subcellularLocation>
    <subcellularLocation>
        <location evidence="1">Nucleus speckle</location>
    </subcellularLocation>
    <text evidence="1">Localized in splicing speckles.</text>
</comment>
<comment type="PTM">
    <text evidence="1">Phosphorylated by PRP4K during spliceosome assembly.</text>
</comment>
<accession>A1A5S1</accession>
<proteinExistence type="evidence at protein level"/>
<keyword id="KW-0507">mRNA processing</keyword>
<keyword id="KW-0508">mRNA splicing</keyword>
<keyword id="KW-0539">Nucleus</keyword>
<keyword id="KW-0597">Phosphoprotein</keyword>
<keyword id="KW-1185">Reference proteome</keyword>
<keyword id="KW-0677">Repeat</keyword>
<keyword id="KW-0747">Spliceosome</keyword>
<dbReference type="EMBL" id="CH474066">
    <property type="protein sequence ID" value="EDL88695.1"/>
    <property type="molecule type" value="Genomic_DNA"/>
</dbReference>
<dbReference type="EMBL" id="BC128779">
    <property type="protein sequence ID" value="AAI28780.1"/>
    <property type="molecule type" value="mRNA"/>
</dbReference>
<dbReference type="RefSeq" id="NP_001073234.1">
    <property type="nucleotide sequence ID" value="NM_001079766.1"/>
</dbReference>
<dbReference type="SMR" id="A1A5S1"/>
<dbReference type="BioGRID" id="265839">
    <property type="interactions" value="2"/>
</dbReference>
<dbReference type="FunCoup" id="A1A5S1">
    <property type="interactions" value="2776"/>
</dbReference>
<dbReference type="STRING" id="10116.ENSRNOP00000073536"/>
<dbReference type="iPTMnet" id="A1A5S1"/>
<dbReference type="PhosphoSitePlus" id="A1A5S1"/>
<dbReference type="jPOST" id="A1A5S1"/>
<dbReference type="PaxDb" id="10116-ENSRNOP00000021723"/>
<dbReference type="PeptideAtlas" id="A1A5S1"/>
<dbReference type="Ensembl" id="ENSRNOT00000083423.2">
    <property type="protein sequence ID" value="ENSRNOP00000073536.1"/>
    <property type="gene ID" value="ENSRNOG00000051498.2"/>
</dbReference>
<dbReference type="GeneID" id="366276"/>
<dbReference type="KEGG" id="rno:366276"/>
<dbReference type="UCSC" id="RGD:1307103">
    <property type="organism name" value="rat"/>
</dbReference>
<dbReference type="AGR" id="RGD:1307103"/>
<dbReference type="CTD" id="24148"/>
<dbReference type="RGD" id="1307103">
    <property type="gene designation" value="Prpf6"/>
</dbReference>
<dbReference type="eggNOG" id="KOG0495">
    <property type="taxonomic scope" value="Eukaryota"/>
</dbReference>
<dbReference type="GeneTree" id="ENSGT00550000075016"/>
<dbReference type="HOGENOM" id="CLU_007010_0_0_1"/>
<dbReference type="InParanoid" id="A1A5S1"/>
<dbReference type="OrthoDB" id="32223at9989"/>
<dbReference type="PhylomeDB" id="A1A5S1"/>
<dbReference type="TreeFam" id="TF105743"/>
<dbReference type="Reactome" id="R-RNO-72163">
    <property type="pathway name" value="mRNA Splicing - Major Pathway"/>
</dbReference>
<dbReference type="Reactome" id="R-RNO-72165">
    <property type="pathway name" value="mRNA Splicing - Minor Pathway"/>
</dbReference>
<dbReference type="PRO" id="PR:A1A5S1"/>
<dbReference type="Proteomes" id="UP000002494">
    <property type="component" value="Chromosome 3"/>
</dbReference>
<dbReference type="Proteomes" id="UP000234681">
    <property type="component" value="Chromosome 3"/>
</dbReference>
<dbReference type="Bgee" id="ENSRNOG00000051498">
    <property type="expression patterns" value="Expressed in skeletal muscle tissue and 20 other cell types or tissues"/>
</dbReference>
<dbReference type="GO" id="GO:0071013">
    <property type="term" value="C:catalytic step 2 spliceosome"/>
    <property type="evidence" value="ECO:0000266"/>
    <property type="project" value="RGD"/>
</dbReference>
<dbReference type="GO" id="GO:0016607">
    <property type="term" value="C:nuclear speck"/>
    <property type="evidence" value="ECO:0000250"/>
    <property type="project" value="UniProtKB"/>
</dbReference>
<dbReference type="GO" id="GO:0005634">
    <property type="term" value="C:nucleus"/>
    <property type="evidence" value="ECO:0000266"/>
    <property type="project" value="RGD"/>
</dbReference>
<dbReference type="GO" id="GO:0071005">
    <property type="term" value="C:U2-type precatalytic spliceosome"/>
    <property type="evidence" value="ECO:0000250"/>
    <property type="project" value="UniProtKB"/>
</dbReference>
<dbReference type="GO" id="GO:0046540">
    <property type="term" value="C:U4/U6 x U5 tri-snRNP complex"/>
    <property type="evidence" value="ECO:0000266"/>
    <property type="project" value="RGD"/>
</dbReference>
<dbReference type="GO" id="GO:0005682">
    <property type="term" value="C:U5 snRNP"/>
    <property type="evidence" value="ECO:0000266"/>
    <property type="project" value="RGD"/>
</dbReference>
<dbReference type="GO" id="GO:0042802">
    <property type="term" value="F:identical protein binding"/>
    <property type="evidence" value="ECO:0000266"/>
    <property type="project" value="RGD"/>
</dbReference>
<dbReference type="GO" id="GO:0030674">
    <property type="term" value="F:protein-macromolecule adaptor activity"/>
    <property type="evidence" value="ECO:0000250"/>
    <property type="project" value="UniProtKB"/>
</dbReference>
<dbReference type="GO" id="GO:0043021">
    <property type="term" value="F:ribonucleoprotein complex binding"/>
    <property type="evidence" value="ECO:0000266"/>
    <property type="project" value="RGD"/>
</dbReference>
<dbReference type="GO" id="GO:0003723">
    <property type="term" value="F:RNA binding"/>
    <property type="evidence" value="ECO:0000266"/>
    <property type="project" value="RGD"/>
</dbReference>
<dbReference type="GO" id="GO:0000398">
    <property type="term" value="P:mRNA splicing, via spliceosome"/>
    <property type="evidence" value="ECO:0000250"/>
    <property type="project" value="UniProtKB"/>
</dbReference>
<dbReference type="GO" id="GO:0045944">
    <property type="term" value="P:positive regulation of transcription by RNA polymerase II"/>
    <property type="evidence" value="ECO:0000266"/>
    <property type="project" value="RGD"/>
</dbReference>
<dbReference type="GO" id="GO:0006403">
    <property type="term" value="P:RNA localization"/>
    <property type="evidence" value="ECO:0000266"/>
    <property type="project" value="RGD"/>
</dbReference>
<dbReference type="GO" id="GO:0000244">
    <property type="term" value="P:spliceosomal tri-snRNP complex assembly"/>
    <property type="evidence" value="ECO:0000250"/>
    <property type="project" value="UniProtKB"/>
</dbReference>
<dbReference type="FunFam" id="1.25.40.10:FF:000649">
    <property type="entry name" value="mRNA splicing factor (Prp1/Zer1), putative"/>
    <property type="match status" value="1"/>
</dbReference>
<dbReference type="FunFam" id="1.25.40.10:FF:000054">
    <property type="entry name" value="Pre-mRNA processing factor 6"/>
    <property type="match status" value="1"/>
</dbReference>
<dbReference type="FunFam" id="1.25.40.10:FF:000058">
    <property type="entry name" value="Pre-mRNA processing factor 6"/>
    <property type="match status" value="1"/>
</dbReference>
<dbReference type="FunFam" id="1.25.40.10:FF:003529">
    <property type="entry name" value="Uncharacterized protein"/>
    <property type="match status" value="1"/>
</dbReference>
<dbReference type="Gene3D" id="1.25.40.10">
    <property type="entry name" value="Tetratricopeptide repeat domain"/>
    <property type="match status" value="3"/>
</dbReference>
<dbReference type="InterPro" id="IPR003107">
    <property type="entry name" value="HAT"/>
</dbReference>
<dbReference type="InterPro" id="IPR010491">
    <property type="entry name" value="PRP1_N"/>
</dbReference>
<dbReference type="InterPro" id="IPR045075">
    <property type="entry name" value="Syf1-like"/>
</dbReference>
<dbReference type="InterPro" id="IPR011990">
    <property type="entry name" value="TPR-like_helical_dom_sf"/>
</dbReference>
<dbReference type="InterPro" id="IPR019734">
    <property type="entry name" value="TPR_rpt"/>
</dbReference>
<dbReference type="PANTHER" id="PTHR11246">
    <property type="entry name" value="PRE-MRNA SPLICING FACTOR"/>
    <property type="match status" value="1"/>
</dbReference>
<dbReference type="PANTHER" id="PTHR11246:SF1">
    <property type="entry name" value="PRE-MRNA-PROCESSING FACTOR 6"/>
    <property type="match status" value="1"/>
</dbReference>
<dbReference type="Pfam" id="PF06424">
    <property type="entry name" value="PRP1_N"/>
    <property type="match status" value="1"/>
</dbReference>
<dbReference type="Pfam" id="PF13432">
    <property type="entry name" value="TPR_16"/>
    <property type="match status" value="1"/>
</dbReference>
<dbReference type="Pfam" id="PF14559">
    <property type="entry name" value="TPR_19"/>
    <property type="match status" value="1"/>
</dbReference>
<dbReference type="SMART" id="SM00386">
    <property type="entry name" value="HAT"/>
    <property type="match status" value="13"/>
</dbReference>
<dbReference type="SMART" id="SM00028">
    <property type="entry name" value="TPR"/>
    <property type="match status" value="4"/>
</dbReference>
<dbReference type="SUPFAM" id="SSF48452">
    <property type="entry name" value="TPR-like"/>
    <property type="match status" value="4"/>
</dbReference>
<dbReference type="PROSITE" id="PS50293">
    <property type="entry name" value="TPR_REGION"/>
    <property type="match status" value="2"/>
</dbReference>